<accession>Q47593</accession>
<name>WBDA2_ECOLX</name>
<dbReference type="EC" id="2.4.1.371" evidence="1"/>
<dbReference type="EMBL" id="D43637">
    <property type="protein sequence ID" value="BAA07750.1"/>
    <property type="molecule type" value="Genomic_DNA"/>
</dbReference>
<dbReference type="PIR" id="I76775">
    <property type="entry name" value="I76775"/>
</dbReference>
<dbReference type="SMR" id="Q47593"/>
<dbReference type="CAZy" id="GT4">
    <property type="family name" value="Glycosyltransferase Family 4"/>
</dbReference>
<dbReference type="BioCyc" id="MetaCyc:MONOMER-21643"/>
<dbReference type="UniPathway" id="UPA00281"/>
<dbReference type="GO" id="GO:0005886">
    <property type="term" value="C:plasma membrane"/>
    <property type="evidence" value="ECO:0007669"/>
    <property type="project" value="UniProtKB-SubCell"/>
</dbReference>
<dbReference type="GO" id="GO:0016757">
    <property type="term" value="F:glycosyltransferase activity"/>
    <property type="evidence" value="ECO:0007669"/>
    <property type="project" value="UniProtKB-KW"/>
</dbReference>
<dbReference type="GO" id="GO:0009243">
    <property type="term" value="P:O antigen biosynthetic process"/>
    <property type="evidence" value="ECO:0007669"/>
    <property type="project" value="UniProtKB-UniPathway"/>
</dbReference>
<dbReference type="CDD" id="cd03809">
    <property type="entry name" value="GT4_MtfB-like"/>
    <property type="match status" value="2"/>
</dbReference>
<dbReference type="Gene3D" id="3.40.50.2000">
    <property type="entry name" value="Glycogen Phosphorylase B"/>
    <property type="match status" value="3"/>
</dbReference>
<dbReference type="InterPro" id="IPR001296">
    <property type="entry name" value="Glyco_trans_1"/>
</dbReference>
<dbReference type="PANTHER" id="PTHR46401">
    <property type="entry name" value="GLYCOSYLTRANSFERASE WBBK-RELATED"/>
    <property type="match status" value="1"/>
</dbReference>
<dbReference type="PANTHER" id="PTHR46401:SF2">
    <property type="entry name" value="GLYCOSYLTRANSFERASE WBBK-RELATED"/>
    <property type="match status" value="1"/>
</dbReference>
<dbReference type="Pfam" id="PF00534">
    <property type="entry name" value="Glycos_transf_1"/>
    <property type="match status" value="2"/>
</dbReference>
<dbReference type="SUPFAM" id="SSF53756">
    <property type="entry name" value="UDP-Glycosyltransferase/glycogen phosphorylase"/>
    <property type="match status" value="2"/>
</dbReference>
<keyword id="KW-0997">Cell inner membrane</keyword>
<keyword id="KW-1003">Cell membrane</keyword>
<keyword id="KW-0328">Glycosyltransferase</keyword>
<keyword id="KW-0472">Membrane</keyword>
<keyword id="KW-0808">Transferase</keyword>
<organism>
    <name type="scientific">Escherichia coli</name>
    <dbReference type="NCBI Taxonomy" id="562"/>
    <lineage>
        <taxon>Bacteria</taxon>
        <taxon>Pseudomonadati</taxon>
        <taxon>Pseudomonadota</taxon>
        <taxon>Gammaproteobacteria</taxon>
        <taxon>Enterobacterales</taxon>
        <taxon>Enterobacteriaceae</taxon>
        <taxon>Escherichia</taxon>
    </lineage>
</organism>
<comment type="function">
    <text evidence="1 2 3">Mannosyltransferase involved in the biosynthesis of the repeat unit of the lipopolysaccharide (LPS) O-antigen region (PubMed:10762260, PubMed:7536735). Catalyzes the polymerization of a tetrasaccharide repeat unit containing two alpha-(1-&gt;3)- and two alpha-(1-&gt;2)-linked mannopyranose residues (By similarity).</text>
</comment>
<comment type="catalytic activity">
    <reaction evidence="1">
        <text>[alpha-D-Man-(1-&gt;3)-alpha-D-Man-(1-&gt;3)-alpha-D-Man-(1-&gt;2)-alpha-D-Man-(1-&gt;2)](n)-alpha-D-Man-(1-&gt;3)-alpha-D-Man-(1-&gt;3)-alpha-D-Man-(1-&gt;3)-alpha-D-GlcNAc-di-trans,octa-cis-undecaprenyl diphosphate + 2 GDP-alpha-D-mannose = alpha-D-Man-(1-&gt;2)-alpha-D-Man-(1-&gt;2)-[alpha-D-Man-(1-&gt;3)-alpha-D-Man-(1-&gt;3)-alpha-D-Man-(1-&gt;2)-alpha-D-Man-(1-&gt;2)](n)-alpha-D-Man-(1-&gt;3)-alpha-D-Man-(1-&gt;3)-alpha-D-Man-(1-&gt;3)-alpha-D-GlcNAc-di-trans,octa-cis-undecaprenyl diphosphate + 2 GDP + 2 H(+)</text>
        <dbReference type="Rhea" id="RHEA:13789"/>
        <dbReference type="Rhea" id="RHEA-COMP:9558"/>
        <dbReference type="Rhea" id="RHEA-COMP:14053"/>
        <dbReference type="ChEBI" id="CHEBI:15378"/>
        <dbReference type="ChEBI" id="CHEBI:57527"/>
        <dbReference type="ChEBI" id="CHEBI:58189"/>
        <dbReference type="ChEBI" id="CHEBI:74010"/>
        <dbReference type="ChEBI" id="CHEBI:138439"/>
        <dbReference type="EC" id="2.4.1.371"/>
    </reaction>
    <physiologicalReaction direction="left-to-right" evidence="1">
        <dbReference type="Rhea" id="RHEA:13790"/>
    </physiologicalReaction>
</comment>
<comment type="catalytic activity">
    <reaction evidence="1">
        <text>alpha-D-Man-(1-&gt;2)-alpha-D-Man-(1-&gt;2)-[alpha-D-Man-(1-&gt;3)-alpha-D-Man-(1-&gt;3)-alpha-D-Man-(1-&gt;2)-alpha-D-Man-(1-&gt;2)](n)-alpha-D-Man-(1-&gt;3)-alpha-D-Man-(1-&gt;3)-alpha-D-Man-(1-&gt;3)-alpha-D-GlcNAc-di-trans,octa-cis-undecaprenyl diphosphate + 2 GDP-alpha-D-mannose = [alpha-D-Man-(1-&gt;3)-alpha-D-Man-(1-&gt;3)-alpha-D-Man-(1-&gt;2)-alpha-D-Man-(1-&gt;2)](n+1)-alpha-D-Man-(1-&gt;3)-alpha-D-Man-(1-&gt;3)-alpha-D-Man-(1-&gt;3)-alpha-D-GlcNAc-di-trans,octa-cis-undecaprenyl diphosphate + 2 GDP + 2 H(+)</text>
        <dbReference type="Rhea" id="RHEA:54980"/>
        <dbReference type="Rhea" id="RHEA-COMP:9558"/>
        <dbReference type="Rhea" id="RHEA-COMP:14055"/>
        <dbReference type="ChEBI" id="CHEBI:15378"/>
        <dbReference type="ChEBI" id="CHEBI:57527"/>
        <dbReference type="ChEBI" id="CHEBI:58189"/>
        <dbReference type="ChEBI" id="CHEBI:74010"/>
        <dbReference type="ChEBI" id="CHEBI:138439"/>
        <dbReference type="EC" id="2.4.1.371"/>
    </reaction>
    <physiologicalReaction direction="left-to-right" evidence="1">
        <dbReference type="Rhea" id="RHEA:54981"/>
    </physiologicalReaction>
</comment>
<comment type="pathway">
    <text evidence="2 3">Bacterial outer membrane biogenesis; LPS O-antigen biosynthesis.</text>
</comment>
<comment type="subunit">
    <text evidence="1">Monomer (By similarity). Interacts with the C-terminal region of WbdD (By similarity).</text>
</comment>
<comment type="subcellular location">
    <subcellularLocation>
        <location evidence="1">Cell inner membrane</location>
        <topology evidence="1">Peripheral membrane protein</topology>
    </subcellularLocation>
    <text evidence="1">Proper localization requires WbdD.</text>
</comment>
<comment type="domain">
    <text evidence="4">Composed of two domains of similar size, connected by an alpha-helix chain (PubMed:9570406). Both N- and C-terminal domains are required for the synthesis of the complete E.coli O9a polysaccharide (PubMed:9570406).</text>
</comment>
<comment type="disruption phenotype">
    <text evidence="4">Elimination of the C-terminal half by transposon insertion or gene deletion causes synthesis of an altered structural O-polysaccharide consisting only of alpha-1,2-linked mannose.</text>
</comment>
<comment type="miscellaneous">
    <text evidence="1">This enzyme is specific for the E.coli serotype O9a O-antigen.</text>
</comment>
<comment type="similarity">
    <text evidence="7">Belongs to the glycosyltransferase group 1 family. Glycosyltransferase 4 subfamily.</text>
</comment>
<evidence type="ECO:0000250" key="1">
    <source>
        <dbReference type="UniProtKB" id="M4QN28"/>
    </source>
</evidence>
<evidence type="ECO:0000269" key="2">
    <source>
    </source>
</evidence>
<evidence type="ECO:0000269" key="3">
    <source>
    </source>
</evidence>
<evidence type="ECO:0000269" key="4">
    <source>
    </source>
</evidence>
<evidence type="ECO:0000303" key="5">
    <source>
    </source>
</evidence>
<evidence type="ECO:0000303" key="6">
    <source>
    </source>
</evidence>
<evidence type="ECO:0000305" key="7"/>
<protein>
    <recommendedName>
        <fullName evidence="7">Serotype-specific mannosyltransferase WbdA</fullName>
        <ecNumber evidence="1">2.4.1.371</ecNumber>
    </recommendedName>
    <alternativeName>
        <fullName evidence="1">Bifunctional alpha-(1-&gt;2), alpha-(1-&gt;3)-mannosyltransferase</fullName>
    </alternativeName>
    <alternativeName>
        <fullName evidence="7">O-antigen chain mannosyltransferase A</fullName>
    </alternativeName>
    <alternativeName>
        <fullName evidence="7">Polymannosyl GlcNAc-diphospho-ditrans,octacis-undecaprenol 2,3-alpha-mannosylpolymerase</fullName>
    </alternativeName>
    <domain>
        <recommendedName>
            <fullName evidence="7">alpha-(1-&gt;2)-mannosyltransferase</fullName>
        </recommendedName>
    </domain>
    <domain>
        <recommendedName>
            <fullName evidence="7">alpha-(1-&gt;3)-mannosyltransferase</fullName>
        </recommendedName>
    </domain>
</protein>
<gene>
    <name evidence="6" type="primary">wbdA</name>
    <name evidence="5" type="synonym">mtfA</name>
</gene>
<feature type="chain" id="PRO_0000459433" description="Serotype-specific mannosyltransferase WbdA">
    <location>
        <begin position="1"/>
        <end position="815"/>
    </location>
</feature>
<feature type="region of interest" description="Alpha-(1-&gt;2)-mannosyltransferase" evidence="1">
    <location>
        <begin position="1"/>
        <end position="374"/>
    </location>
</feature>
<feature type="region of interest" description="Alpha-(1-&gt;3)-mannosyltransferase" evidence="1">
    <location>
        <begin position="431"/>
        <end position="804"/>
    </location>
</feature>
<feature type="mutagenesis site" description="Cannot convert the O9a polysaccharide into O9 serotype." evidence="2">
    <original>R</original>
    <variation>C</variation>
    <location>
        <position position="55"/>
    </location>
</feature>
<sequence>MSRAIIENAGEHRVSILINGMYPIDNINDVKMAYRDLLTDEDMFIFSAVAPTAYRHIENHGRSKAAQAARDIAIANIAPDIVYVISFFEGHSDSYTVSIPADNVPWKTVCVCHDLIPLLNKERYLGDPNFREFYMNKLAEFERADAIFAISQSAAQEVIEYTDIASDRVLNISSAVGEEFAVIDYSAERIQSLKDKYSLPDEFILSLAMIEPRKNIEALIHAYSLLPAELQQRYPMVLAYKVQPEQLERILRLAESYGLSRSQLIFTGFLTDDDLIALYNLCKLFVFPSLHEGFGLPPLEAMRCGAATLGSNITSLPEVIGWEDAMFNPHDVQDIRRVMEKALTDEAFYRELKAHALAQSAKFSWANTAHLAIEGFTRLLQSSQETDAGQAESVTASRLQMMQKIDALSEVDRLGLAWAVARNSFKRHTRKLLVDISVLAHDDAKTGIQRVSRSILSELLKSGVPGYEVSAVYYTPGECYRYANQYLSSHFPGEFGADEPVLFSKDDVLIATDLTAHLFPELVTQIDSMRAAGAFACFVVHDILPLRRPEWSIEGIQRDFPIWLSCLAEHADRLICVSASVAEDVKAWIAENRHWVKPNPLQTVSNFHLGADLDASVPSTGMPDNAQALLAAMAAAPSFIMVGTMEPRKGHAQTLAAFEELWREGKDYNLFIVGKQGWNVDSLCEKLRHHPQLNKKLFWLQNISDEFLAELYARSRALIFASQGEGFGLPLIEAAQKKLPVIIRDIPVFKEIAQEHAWYFSGEAPSDIAKAVEEWLALYEQNAHPRSENINWLTWKQSAEFLLKNLPIIAPAAKQ</sequence>
<reference key="1">
    <citation type="journal article" date="1995" name="J. Bacteriol.">
        <title>Expression of the O9 polysaccharide of Escherichia coli: sequencing of the E. coli O9 rfb gene cluster, characterization of mannosyl transferases, and evidence for an ATP-binding cassette transport system.</title>
        <authorList>
            <person name="Kido N."/>
            <person name="Torgov V.I."/>
            <person name="Sugiyama T."/>
            <person name="Uchiya K."/>
            <person name="Sugihara H."/>
            <person name="Komatsu T."/>
            <person name="Kato N."/>
            <person name="Jann K."/>
        </authorList>
    </citation>
    <scope>NUCLEOTIDE SEQUENCE [GENOMIC DNA]</scope>
    <scope>FUNCTION</scope>
    <scope>PATHWAY</scope>
    <source>
        <strain>O9a:K31-:H- / F719</strain>
    </source>
</reference>
<reference key="2">
    <citation type="journal article" date="1998" name="Mol. Microbiol.">
        <title>Synthesis of Escherichia coli O9a polysaccharide requires the participation of two domains of WbdA, a mannosyltransferase encoded within the wb* gene cluster.</title>
        <authorList>
            <person name="Kido N."/>
            <person name="Sugiyama T."/>
            <person name="Yokochi T."/>
            <person name="Kobayashi H."/>
            <person name="Okawa Y."/>
        </authorList>
    </citation>
    <scope>DOMAIN</scope>
    <scope>DISRUPTION PHENOTYPE</scope>
    <source>
        <strain>O9a:K31-:H- / F719</strain>
    </source>
</reference>
<reference key="3">
    <citation type="journal article" date="2000" name="J. Bacteriol.">
        <title>A single amino acid substitution in a mannosyltransferase, WbdA, converts the Escherichia coli O9 polysaccharide into O9a: generation of a new O-serotype group.</title>
        <authorList>
            <person name="Kido N."/>
            <person name="Kobayashi H."/>
        </authorList>
    </citation>
    <scope>FUNCTION</scope>
    <scope>PATHWAY</scope>
    <scope>MUTAGENESIS OF ARG-55</scope>
    <source>
        <strain>O9a:K31-:H- / F719</strain>
    </source>
</reference>
<proteinExistence type="evidence at protein level"/>